<accession>Q6AYR6</accession>
<organism>
    <name type="scientific">Rattus norvegicus</name>
    <name type="common">Rat</name>
    <dbReference type="NCBI Taxonomy" id="10116"/>
    <lineage>
        <taxon>Eukaryota</taxon>
        <taxon>Metazoa</taxon>
        <taxon>Chordata</taxon>
        <taxon>Craniata</taxon>
        <taxon>Vertebrata</taxon>
        <taxon>Euteleostomi</taxon>
        <taxon>Mammalia</taxon>
        <taxon>Eutheria</taxon>
        <taxon>Euarchontoglires</taxon>
        <taxon>Glires</taxon>
        <taxon>Rodentia</taxon>
        <taxon>Myomorpha</taxon>
        <taxon>Muroidea</taxon>
        <taxon>Muridae</taxon>
        <taxon>Murinae</taxon>
        <taxon>Rattus</taxon>
    </lineage>
</organism>
<proteinExistence type="evidence at transcript level"/>
<feature type="chain" id="PRO_0000287206" description="Haloacid dehalogenase-like hydrolase domain-containing protein 2">
    <location>
        <begin position="1"/>
        <end position="259"/>
    </location>
</feature>
<feature type="coiled-coil region" evidence="3">
    <location>
        <begin position="49"/>
        <end position="71"/>
    </location>
</feature>
<feature type="binding site" evidence="1">
    <location>
        <begin position="13"/>
        <end position="15"/>
    </location>
    <ligand>
        <name>substrate</name>
    </ligand>
</feature>
<feature type="binding site" evidence="1">
    <location>
        <position position="13"/>
    </location>
    <ligand>
        <name>Mg(2+)</name>
        <dbReference type="ChEBI" id="CHEBI:18420"/>
    </ligand>
</feature>
<feature type="binding site" evidence="1">
    <location>
        <position position="15"/>
    </location>
    <ligand>
        <name>Mg(2+)</name>
        <dbReference type="ChEBI" id="CHEBI:18420"/>
    </ligand>
</feature>
<feature type="binding site" evidence="1">
    <location>
        <begin position="46"/>
        <end position="47"/>
    </location>
    <ligand>
        <name>substrate</name>
    </ligand>
</feature>
<feature type="binding site" evidence="1">
    <location>
        <position position="179"/>
    </location>
    <ligand>
        <name>substrate</name>
    </ligand>
</feature>
<feature type="binding site" evidence="1">
    <location>
        <position position="204"/>
    </location>
    <ligand>
        <name>Mg(2+)</name>
        <dbReference type="ChEBI" id="CHEBI:18420"/>
    </ligand>
</feature>
<feature type="modified residue" description="N6-succinyllysine" evidence="2">
    <location>
        <position position="50"/>
    </location>
</feature>
<evidence type="ECO:0000250" key="1"/>
<evidence type="ECO:0000250" key="2">
    <source>
        <dbReference type="UniProtKB" id="Q3UGR5"/>
    </source>
</evidence>
<evidence type="ECO:0000255" key="3"/>
<evidence type="ECO:0000305" key="4"/>
<name>HDHD2_RAT</name>
<dbReference type="EMBL" id="BC078941">
    <property type="protein sequence ID" value="AAH78941.1"/>
    <property type="molecule type" value="mRNA"/>
</dbReference>
<dbReference type="RefSeq" id="NP_001399426.1">
    <property type="nucleotide sequence ID" value="NM_001412497.1"/>
</dbReference>
<dbReference type="RefSeq" id="NP_001399427.1">
    <property type="nucleotide sequence ID" value="NM_001412498.1"/>
</dbReference>
<dbReference type="RefSeq" id="XP_006255027.1">
    <property type="nucleotide sequence ID" value="XM_006254965.3"/>
</dbReference>
<dbReference type="RefSeq" id="XP_006255028.1">
    <property type="nucleotide sequence ID" value="XM_006254966.3"/>
</dbReference>
<dbReference type="SMR" id="Q6AYR6"/>
<dbReference type="FunCoup" id="Q6AYR6">
    <property type="interactions" value="1790"/>
</dbReference>
<dbReference type="STRING" id="10116.ENSRNOP00000039553"/>
<dbReference type="iPTMnet" id="Q6AYR6"/>
<dbReference type="PhosphoSitePlus" id="Q6AYR6"/>
<dbReference type="SwissPalm" id="Q6AYR6"/>
<dbReference type="PaxDb" id="10116-ENSRNOP00000039553"/>
<dbReference type="Ensembl" id="ENSRNOT00000080660.2">
    <property type="protein sequence ID" value="ENSRNOP00000075095.1"/>
    <property type="gene ID" value="ENSRNOG00000043171.5"/>
</dbReference>
<dbReference type="GeneID" id="361351"/>
<dbReference type="AGR" id="RGD:1308579"/>
<dbReference type="RGD" id="1308579">
    <property type="gene designation" value="Hdhd2"/>
</dbReference>
<dbReference type="eggNOG" id="KOG3040">
    <property type="taxonomic scope" value="Eukaryota"/>
</dbReference>
<dbReference type="eggNOG" id="KOG4779">
    <property type="taxonomic scope" value="Eukaryota"/>
</dbReference>
<dbReference type="GeneTree" id="ENSGT00940000155805"/>
<dbReference type="HOGENOM" id="CLU_043473_4_0_1"/>
<dbReference type="InParanoid" id="Q6AYR6"/>
<dbReference type="PRO" id="PR:Q6AYR6"/>
<dbReference type="Proteomes" id="UP000002494">
    <property type="component" value="Chromosome 18"/>
</dbReference>
<dbReference type="Bgee" id="ENSRNOG00000043171">
    <property type="expression patterns" value="Expressed in ovary and 19 other cell types or tissues"/>
</dbReference>
<dbReference type="ExpressionAtlas" id="Q6AYR6">
    <property type="expression patterns" value="baseline and differential"/>
</dbReference>
<dbReference type="GO" id="GO:0005737">
    <property type="term" value="C:cytoplasm"/>
    <property type="evidence" value="ECO:0000318"/>
    <property type="project" value="GO_Central"/>
</dbReference>
<dbReference type="GO" id="GO:0019899">
    <property type="term" value="F:enzyme binding"/>
    <property type="evidence" value="ECO:0000250"/>
    <property type="project" value="CAFA"/>
</dbReference>
<dbReference type="GO" id="GO:0046872">
    <property type="term" value="F:metal ion binding"/>
    <property type="evidence" value="ECO:0007669"/>
    <property type="project" value="UniProtKB-KW"/>
</dbReference>
<dbReference type="GO" id="GO:0016791">
    <property type="term" value="F:phosphatase activity"/>
    <property type="evidence" value="ECO:0000318"/>
    <property type="project" value="GO_Central"/>
</dbReference>
<dbReference type="CDD" id="cd07509">
    <property type="entry name" value="HAD_PPase"/>
    <property type="match status" value="1"/>
</dbReference>
<dbReference type="FunFam" id="3.40.50.1000:FF:000452">
    <property type="entry name" value="Haloacid dehalogenase-like hydrolase domain-containing protein 2"/>
    <property type="match status" value="2"/>
</dbReference>
<dbReference type="Gene3D" id="3.40.50.1000">
    <property type="entry name" value="HAD superfamily/HAD-like"/>
    <property type="match status" value="2"/>
</dbReference>
<dbReference type="InterPro" id="IPR036412">
    <property type="entry name" value="HAD-like_sf"/>
</dbReference>
<dbReference type="InterPro" id="IPR006357">
    <property type="entry name" value="HAD-SF_hydro_IIA"/>
</dbReference>
<dbReference type="InterPro" id="IPR023214">
    <property type="entry name" value="HAD_sf"/>
</dbReference>
<dbReference type="InterPro" id="IPR006355">
    <property type="entry name" value="LHPP/HDHD2"/>
</dbReference>
<dbReference type="NCBIfam" id="TIGR01460">
    <property type="entry name" value="HAD-SF-IIA"/>
    <property type="match status" value="1"/>
</dbReference>
<dbReference type="NCBIfam" id="TIGR01458">
    <property type="entry name" value="HAD-SF-IIA-hyp3"/>
    <property type="match status" value="1"/>
</dbReference>
<dbReference type="PANTHER" id="PTHR19288">
    <property type="entry name" value="4-NITROPHENYLPHOSPHATASE-RELATED"/>
    <property type="match status" value="1"/>
</dbReference>
<dbReference type="PANTHER" id="PTHR19288:SF46">
    <property type="entry name" value="HALOACID DEHALOGENASE-LIKE HYDROLASE DOMAIN-CONTAINING PROTEIN 2"/>
    <property type="match status" value="1"/>
</dbReference>
<dbReference type="Pfam" id="PF13344">
    <property type="entry name" value="Hydrolase_6"/>
    <property type="match status" value="1"/>
</dbReference>
<dbReference type="Pfam" id="PF13242">
    <property type="entry name" value="Hydrolase_like"/>
    <property type="match status" value="1"/>
</dbReference>
<dbReference type="SFLD" id="SFLDG01139">
    <property type="entry name" value="C2.A:_Pyridoxal_Phosphate_Phos"/>
    <property type="match status" value="1"/>
</dbReference>
<dbReference type="SFLD" id="SFLDS00003">
    <property type="entry name" value="Haloacid_Dehalogenase"/>
    <property type="match status" value="1"/>
</dbReference>
<dbReference type="SUPFAM" id="SSF56784">
    <property type="entry name" value="HAD-like"/>
    <property type="match status" value="1"/>
</dbReference>
<protein>
    <recommendedName>
        <fullName>Haloacid dehalogenase-like hydrolase domain-containing protein 2</fullName>
    </recommendedName>
</protein>
<sequence>MAARRVLKAVLVDLSGTLHIEDAAVPGAQEALKRLRAASVMVRFVTNTTKESKRDLLERLRKLEFDISEEEIFTSLTAARNLIEQRQVRPMLLVDDRALPDFTGVQTHDPNAVVIGLAPEHFHYQLLNEAFRLLLDGAPLIAIHKARYYKRKDGLALGPGPFVTALEYATDTKAVVVGKPEKTFFLEALRDTDCAPEEAVMIGDDCRDDVDGAQNIGMLGILVKTGKYKAADEEKINPPPYLTCESFPHAVDHILQHLL</sequence>
<comment type="cofactor">
    <cofactor evidence="1">
        <name>Mg(2+)</name>
        <dbReference type="ChEBI" id="CHEBI:18420"/>
    </cofactor>
    <text evidence="1">Binds 1 Mg(2+) ion per subunit.</text>
</comment>
<comment type="similarity">
    <text evidence="4">Belongs to the HAD-like hydrolase superfamily.</text>
</comment>
<reference key="1">
    <citation type="journal article" date="2004" name="Genome Res.">
        <title>The status, quality, and expansion of the NIH full-length cDNA project: the Mammalian Gene Collection (MGC).</title>
        <authorList>
            <consortium name="The MGC Project Team"/>
        </authorList>
    </citation>
    <scope>NUCLEOTIDE SEQUENCE [LARGE SCALE MRNA]</scope>
    <source>
        <tissue>Kidney</tissue>
    </source>
</reference>
<keyword id="KW-0175">Coiled coil</keyword>
<keyword id="KW-0460">Magnesium</keyword>
<keyword id="KW-0479">Metal-binding</keyword>
<keyword id="KW-1185">Reference proteome</keyword>
<gene>
    <name type="primary">Hdhd2</name>
</gene>